<organismHost>
    <name type="scientific">Narcissus pseudonarcissus</name>
    <name type="common">Daffodil</name>
    <dbReference type="NCBI Taxonomy" id="39639"/>
</organismHost>
<feature type="chain" id="PRO_0000222585" description="Movement protein TGB2">
    <location>
        <begin position="1"/>
        <end position="130"/>
    </location>
</feature>
<feature type="topological domain" description="Cytoplasmic" evidence="1">
    <location>
        <begin position="1"/>
        <end position="12"/>
    </location>
</feature>
<feature type="transmembrane region" description="Helical" evidence="2">
    <location>
        <begin position="13"/>
        <end position="30"/>
    </location>
</feature>
<feature type="topological domain" description="Lumenal" evidence="1">
    <location>
        <begin position="31"/>
        <end position="72"/>
    </location>
</feature>
<feature type="transmembrane region" description="Helical" evidence="2">
    <location>
        <begin position="73"/>
        <end position="90"/>
    </location>
</feature>
<feature type="topological domain" description="Cytoplasmic" evidence="1">
    <location>
        <begin position="91"/>
        <end position="130"/>
    </location>
</feature>
<feature type="region of interest" description="Disordered" evidence="3">
    <location>
        <begin position="110"/>
        <end position="130"/>
    </location>
</feature>
<gene>
    <name type="ORF">ORF3</name>
</gene>
<name>TGB2_NMV</name>
<comment type="function">
    <text evidence="1">Plays a role in viral cell-to-cell propagation, by facilitating genome transport to neighboring plant cells through plasmosdesmata,.</text>
</comment>
<comment type="subcellular location">
    <subcellularLocation>
        <location evidence="1">Host endoplasmic reticulum membrane</location>
    </subcellularLocation>
</comment>
<comment type="miscellaneous">
    <text>TGBp1, TGBp2 and TGBp3 seem to act together for cell-to-cell propagation. TGBp1 is the main movement protein that physically cross the plasmodesma with the viral genome. TGBp2 and TGBp3 would facilitate TGBp1 function.</text>
</comment>
<comment type="similarity">
    <text evidence="4">Belongs to the Tymovirales TGBp2 protein family.</text>
</comment>
<accession>P15097</accession>
<protein>
    <recommendedName>
        <fullName>Movement protein TGB2</fullName>
    </recommendedName>
    <alternativeName>
        <fullName>14 kDa protein</fullName>
    </alternativeName>
    <alternativeName>
        <fullName>Triple gene block 2 protein</fullName>
        <shortName>TGBp2</shortName>
    </alternativeName>
</protein>
<evidence type="ECO:0000250" key="1"/>
<evidence type="ECO:0000255" key="2"/>
<evidence type="ECO:0000256" key="3">
    <source>
        <dbReference type="SAM" id="MobiDB-lite"/>
    </source>
</evidence>
<evidence type="ECO:0000305" key="4"/>
<keyword id="KW-1038">Host endoplasmic reticulum</keyword>
<keyword id="KW-1043">Host membrane</keyword>
<keyword id="KW-0472">Membrane</keyword>
<keyword id="KW-1185">Reference proteome</keyword>
<keyword id="KW-0812">Transmembrane</keyword>
<keyword id="KW-1133">Transmembrane helix</keyword>
<keyword id="KW-0813">Transport</keyword>
<keyword id="KW-0916">Viral movement protein</keyword>
<proteinExistence type="inferred from homology"/>
<organism>
    <name type="scientific">Narcissus mosaic virus</name>
    <name type="common">NMV</name>
    <dbReference type="NCBI Taxonomy" id="12180"/>
    <lineage>
        <taxon>Viruses</taxon>
        <taxon>Riboviria</taxon>
        <taxon>Orthornavirae</taxon>
        <taxon>Kitrinoviricota</taxon>
        <taxon>Alsuviricetes</taxon>
        <taxon>Tymovirales</taxon>
        <taxon>Alphaflexiviridae</taxon>
        <taxon>Potexvirus</taxon>
    </lineage>
</organism>
<dbReference type="EMBL" id="D13747">
    <property type="protein sequence ID" value="BAA02893.1"/>
    <property type="molecule type" value="Genomic_RNA"/>
</dbReference>
<dbReference type="PIR" id="JT0472">
    <property type="entry name" value="WMWGN2"/>
</dbReference>
<dbReference type="RefSeq" id="NP_040780.1">
    <property type="nucleotide sequence ID" value="NC_001441.1"/>
</dbReference>
<dbReference type="KEGG" id="vg:1494018"/>
<dbReference type="OrthoDB" id="20634at10239"/>
<dbReference type="Proteomes" id="UP000008865">
    <property type="component" value="Genome"/>
</dbReference>
<dbReference type="GO" id="GO:0044167">
    <property type="term" value="C:host cell endoplasmic reticulum membrane"/>
    <property type="evidence" value="ECO:0007669"/>
    <property type="project" value="UniProtKB-SubCell"/>
</dbReference>
<dbReference type="GO" id="GO:0016020">
    <property type="term" value="C:membrane"/>
    <property type="evidence" value="ECO:0007669"/>
    <property type="project" value="UniProtKB-KW"/>
</dbReference>
<dbReference type="GO" id="GO:0046740">
    <property type="term" value="P:transport of virus in host, cell to cell"/>
    <property type="evidence" value="ECO:0007669"/>
    <property type="project" value="UniProtKB-KW"/>
</dbReference>
<dbReference type="InterPro" id="IPR001896">
    <property type="entry name" value="Plant_vir_prot"/>
</dbReference>
<dbReference type="Pfam" id="PF01307">
    <property type="entry name" value="Plant_vir_prot"/>
    <property type="match status" value="1"/>
</dbReference>
<reference key="1">
    <citation type="journal article" date="1989" name="J. Gen. Virol.">
        <title>Nucleotide sequence of narcissus mosaic virus RNA.</title>
        <authorList>
            <person name="Zuidema D."/>
            <person name="Linthorst H.J.M."/>
            <person name="Huisman M.J."/>
            <person name="Asjes C.J."/>
            <person name="Bol J.F."/>
        </authorList>
    </citation>
    <scope>NUCLEOTIDE SEQUENCE [GENOMIC RNA]</scope>
</reference>
<reference key="2">
    <citation type="journal article" date="2005" name="Mol. Plant Microbe Interact.">
        <title>A new cell-to-cell transport model for Potexviruses.</title>
        <authorList>
            <person name="Verchot-Lubicz J."/>
        </authorList>
    </citation>
    <scope>REVIEW</scope>
</reference>
<sequence length="130" mass="13998">MPGLTPPVNYEQVYKVLAIGFLLCASIYCLRSNHLPHVGDNIHSLPHGGNYADGTKRVQYFRPHSSTSTNHKYTALCAVLTLSLLIFAQTRLAAGNRITSVSICHHCSSQGSLSGGNHGRVSGHSELPTT</sequence>